<organism>
    <name type="scientific">Geobacillus thermodenitrificans (strain NG80-2)</name>
    <dbReference type="NCBI Taxonomy" id="420246"/>
    <lineage>
        <taxon>Bacteria</taxon>
        <taxon>Bacillati</taxon>
        <taxon>Bacillota</taxon>
        <taxon>Bacilli</taxon>
        <taxon>Bacillales</taxon>
        <taxon>Anoxybacillaceae</taxon>
        <taxon>Geobacillus</taxon>
    </lineage>
</organism>
<reference key="1">
    <citation type="journal article" date="2007" name="Proc. Natl. Acad. Sci. U.S.A.">
        <title>Genome and proteome of long-chain alkane degrading Geobacillus thermodenitrificans NG80-2 isolated from a deep-subsurface oil reservoir.</title>
        <authorList>
            <person name="Feng L."/>
            <person name="Wang W."/>
            <person name="Cheng J."/>
            <person name="Ren Y."/>
            <person name="Zhao G."/>
            <person name="Gao C."/>
            <person name="Tang Y."/>
            <person name="Liu X."/>
            <person name="Han W."/>
            <person name="Peng X."/>
            <person name="Liu R."/>
            <person name="Wang L."/>
        </authorList>
    </citation>
    <scope>NUCLEOTIDE SEQUENCE [LARGE SCALE GENOMIC DNA]</scope>
    <source>
        <strain>NG80-2</strain>
    </source>
</reference>
<accession>A4IPB5</accession>
<evidence type="ECO:0000255" key="1">
    <source>
        <dbReference type="HAMAP-Rule" id="MF_01672"/>
    </source>
</evidence>
<sequence length="298" mass="33479">MFKENKVKLGIAPIGWTNDDMPELGGEITFEQCISEMALAGFVGCEVGNKYPRDTKILKKALSLRGLSIASAWFSAFLTSKPFEETAEAFKAHRDFLYEMGAKVIVVSEQGNSIQGQMETPLFDKKPVFTEEEWDLLIDGLNRLGDLAAEKGMNIVYHHHMGTGIQTTEEIDRLMEETDPKKVSLLYDTGHLVFSGEDHLHVLNKHINRIRHVHLKDVRIEVANKVREEKMSFLQAVKAGVFTVPGDGVIDFKPVFEALDAAGYEGWFVVEAEQDPAIANPFEYALKARQYIRETCGL</sequence>
<gene>
    <name evidence="1" type="primary">iolE</name>
    <name type="ordered locus">GTNG_1809</name>
</gene>
<name>IOLE_GEOTN</name>
<keyword id="KW-0170">Cobalt</keyword>
<keyword id="KW-0456">Lyase</keyword>
<keyword id="KW-0464">Manganese</keyword>
<dbReference type="EC" id="4.2.1.44" evidence="1"/>
<dbReference type="EMBL" id="CP000557">
    <property type="protein sequence ID" value="ABO67169.1"/>
    <property type="molecule type" value="Genomic_DNA"/>
</dbReference>
<dbReference type="RefSeq" id="WP_008880028.1">
    <property type="nucleotide sequence ID" value="NC_009328.1"/>
</dbReference>
<dbReference type="SMR" id="A4IPB5"/>
<dbReference type="GeneID" id="87624029"/>
<dbReference type="KEGG" id="gtn:GTNG_1809"/>
<dbReference type="eggNOG" id="COG1082">
    <property type="taxonomic scope" value="Bacteria"/>
</dbReference>
<dbReference type="HOGENOM" id="CLU_059523_0_0_9"/>
<dbReference type="UniPathway" id="UPA00076">
    <property type="reaction ID" value="UER00144"/>
</dbReference>
<dbReference type="Proteomes" id="UP000001578">
    <property type="component" value="Chromosome"/>
</dbReference>
<dbReference type="GO" id="GO:0030145">
    <property type="term" value="F:manganese ion binding"/>
    <property type="evidence" value="ECO:0007669"/>
    <property type="project" value="UniProtKB-UniRule"/>
</dbReference>
<dbReference type="GO" id="GO:0050114">
    <property type="term" value="F:myo-inosose-2 dehydratase activity"/>
    <property type="evidence" value="ECO:0007669"/>
    <property type="project" value="UniProtKB-UniRule"/>
</dbReference>
<dbReference type="GO" id="GO:0019310">
    <property type="term" value="P:inositol catabolic process"/>
    <property type="evidence" value="ECO:0007669"/>
    <property type="project" value="UniProtKB-UniRule"/>
</dbReference>
<dbReference type="Gene3D" id="3.20.20.150">
    <property type="entry name" value="Divalent-metal-dependent TIM barrel enzymes"/>
    <property type="match status" value="1"/>
</dbReference>
<dbReference type="HAMAP" id="MF_01672">
    <property type="entry name" value="IolE"/>
    <property type="match status" value="1"/>
</dbReference>
<dbReference type="InterPro" id="IPR023952">
    <property type="entry name" value="IolE"/>
</dbReference>
<dbReference type="InterPro" id="IPR030823">
    <property type="entry name" value="IolE/MocC"/>
</dbReference>
<dbReference type="InterPro" id="IPR050312">
    <property type="entry name" value="IolE/XylAMocC-like"/>
</dbReference>
<dbReference type="InterPro" id="IPR036237">
    <property type="entry name" value="Xyl_isomerase-like_sf"/>
</dbReference>
<dbReference type="InterPro" id="IPR013022">
    <property type="entry name" value="Xyl_isomerase-like_TIM-brl"/>
</dbReference>
<dbReference type="NCBIfam" id="TIGR04379">
    <property type="entry name" value="myo_inos_iolE"/>
    <property type="match status" value="1"/>
</dbReference>
<dbReference type="PANTHER" id="PTHR12110">
    <property type="entry name" value="HYDROXYPYRUVATE ISOMERASE"/>
    <property type="match status" value="1"/>
</dbReference>
<dbReference type="PANTHER" id="PTHR12110:SF41">
    <property type="entry name" value="INOSOSE DEHYDRATASE"/>
    <property type="match status" value="1"/>
</dbReference>
<dbReference type="Pfam" id="PF01261">
    <property type="entry name" value="AP_endonuc_2"/>
    <property type="match status" value="1"/>
</dbReference>
<dbReference type="SUPFAM" id="SSF51658">
    <property type="entry name" value="Xylose isomerase-like"/>
    <property type="match status" value="1"/>
</dbReference>
<feature type="chain" id="PRO_0000352368" description="Inosose dehydratase">
    <location>
        <begin position="1"/>
        <end position="298"/>
    </location>
</feature>
<proteinExistence type="inferred from homology"/>
<comment type="function">
    <text evidence="1">Catalyzes the dehydration of inosose (2-keto-myo-inositol, 2KMI or 2,4,6/3,5-pentahydroxycyclohexanone) to 3D-(3,5/4)-trihydroxycyclohexane-1,2-dione (D-2,3-diketo-4-deoxy-epi-inositol).</text>
</comment>
<comment type="catalytic activity">
    <reaction evidence="1">
        <text>scyllo-inosose = 3D-3,5/4-trihydroxycyclohexane-1,2-dione + H2O</text>
        <dbReference type="Rhea" id="RHEA:14065"/>
        <dbReference type="ChEBI" id="CHEBI:15377"/>
        <dbReference type="ChEBI" id="CHEBI:17811"/>
        <dbReference type="ChEBI" id="CHEBI:28446"/>
        <dbReference type="EC" id="4.2.1.44"/>
    </reaction>
</comment>
<comment type="cofactor">
    <cofactor evidence="1">
        <name>glutathione</name>
        <dbReference type="ChEBI" id="CHEBI:57925"/>
    </cofactor>
</comment>
<comment type="cofactor">
    <cofactor evidence="1">
        <name>Co(2+)</name>
        <dbReference type="ChEBI" id="CHEBI:48828"/>
    </cofactor>
    <cofactor evidence="1">
        <name>Mn(2+)</name>
        <dbReference type="ChEBI" id="CHEBI:29035"/>
    </cofactor>
</comment>
<comment type="pathway">
    <text evidence="1">Polyol metabolism; myo-inositol degradation into acetyl-CoA; acetyl-CoA from myo-inositol: step 2/7.</text>
</comment>
<comment type="similarity">
    <text evidence="1">Belongs to the IolE/MocC family.</text>
</comment>
<protein>
    <recommendedName>
        <fullName evidence="1">Inosose dehydratase</fullName>
        <ecNumber evidence="1">4.2.1.44</ecNumber>
    </recommendedName>
    <alternativeName>
        <fullName evidence="1">2-keto-myo-inositol dehydratase</fullName>
        <shortName evidence="1">2KMI dehydratase</shortName>
    </alternativeName>
</protein>